<comment type="function">
    <text evidence="1">Plays a role in peptidoglycan recycling by cleaving the terminal beta-1,4-linked N-acetylglucosamine (GlcNAc) from peptide-linked peptidoglycan fragments, giving rise to free GlcNAc, anhydro-N-acetylmuramic acid and anhydro-N-acetylmuramic acid-linked peptides.</text>
</comment>
<comment type="catalytic activity">
    <reaction evidence="1">
        <text>Hydrolysis of terminal non-reducing N-acetyl-D-hexosamine residues in N-acetyl-beta-D-hexosaminides.</text>
        <dbReference type="EC" id="3.2.1.52"/>
    </reaction>
</comment>
<comment type="pathway">
    <text evidence="1">Cell wall biogenesis; peptidoglycan recycling.</text>
</comment>
<comment type="subcellular location">
    <subcellularLocation>
        <location evidence="1">Cytoplasm</location>
    </subcellularLocation>
</comment>
<comment type="similarity">
    <text evidence="1">Belongs to the glycosyl hydrolase 3 family. NagZ subfamily.</text>
</comment>
<accession>Q57QE6</accession>
<dbReference type="EC" id="3.2.1.52" evidence="1"/>
<dbReference type="EMBL" id="AE017220">
    <property type="protein sequence ID" value="AAX65065.1"/>
    <property type="molecule type" value="Genomic_DNA"/>
</dbReference>
<dbReference type="RefSeq" id="WP_000529340.1">
    <property type="nucleotide sequence ID" value="NC_006905.1"/>
</dbReference>
<dbReference type="SMR" id="Q57QE6"/>
<dbReference type="CAZy" id="GH3">
    <property type="family name" value="Glycoside Hydrolase Family 3"/>
</dbReference>
<dbReference type="KEGG" id="sec:SCH_1159"/>
<dbReference type="HOGENOM" id="CLU_008392_0_0_6"/>
<dbReference type="UniPathway" id="UPA00544"/>
<dbReference type="Proteomes" id="UP000000538">
    <property type="component" value="Chromosome"/>
</dbReference>
<dbReference type="GO" id="GO:0005737">
    <property type="term" value="C:cytoplasm"/>
    <property type="evidence" value="ECO:0007669"/>
    <property type="project" value="UniProtKB-SubCell"/>
</dbReference>
<dbReference type="GO" id="GO:0004563">
    <property type="term" value="F:beta-N-acetylhexosaminidase activity"/>
    <property type="evidence" value="ECO:0007669"/>
    <property type="project" value="UniProtKB-UniRule"/>
</dbReference>
<dbReference type="GO" id="GO:0005975">
    <property type="term" value="P:carbohydrate metabolic process"/>
    <property type="evidence" value="ECO:0007669"/>
    <property type="project" value="InterPro"/>
</dbReference>
<dbReference type="GO" id="GO:0051301">
    <property type="term" value="P:cell division"/>
    <property type="evidence" value="ECO:0007669"/>
    <property type="project" value="UniProtKB-KW"/>
</dbReference>
<dbReference type="GO" id="GO:0071555">
    <property type="term" value="P:cell wall organization"/>
    <property type="evidence" value="ECO:0007669"/>
    <property type="project" value="UniProtKB-KW"/>
</dbReference>
<dbReference type="GO" id="GO:0009252">
    <property type="term" value="P:peptidoglycan biosynthetic process"/>
    <property type="evidence" value="ECO:0007669"/>
    <property type="project" value="UniProtKB-KW"/>
</dbReference>
<dbReference type="GO" id="GO:0009254">
    <property type="term" value="P:peptidoglycan turnover"/>
    <property type="evidence" value="ECO:0007669"/>
    <property type="project" value="UniProtKB-UniRule"/>
</dbReference>
<dbReference type="GO" id="GO:0008360">
    <property type="term" value="P:regulation of cell shape"/>
    <property type="evidence" value="ECO:0007669"/>
    <property type="project" value="UniProtKB-KW"/>
</dbReference>
<dbReference type="FunFam" id="3.20.20.300:FF:000001">
    <property type="entry name" value="Beta-hexosaminidase"/>
    <property type="match status" value="1"/>
</dbReference>
<dbReference type="Gene3D" id="3.20.20.300">
    <property type="entry name" value="Glycoside hydrolase, family 3, N-terminal domain"/>
    <property type="match status" value="1"/>
</dbReference>
<dbReference type="HAMAP" id="MF_00364">
    <property type="entry name" value="NagZ"/>
    <property type="match status" value="1"/>
</dbReference>
<dbReference type="InterPro" id="IPR022956">
    <property type="entry name" value="Beta_hexosaminidase_bac"/>
</dbReference>
<dbReference type="InterPro" id="IPR019800">
    <property type="entry name" value="Glyco_hydro_3_AS"/>
</dbReference>
<dbReference type="InterPro" id="IPR001764">
    <property type="entry name" value="Glyco_hydro_3_N"/>
</dbReference>
<dbReference type="InterPro" id="IPR036962">
    <property type="entry name" value="Glyco_hydro_3_N_sf"/>
</dbReference>
<dbReference type="InterPro" id="IPR017853">
    <property type="entry name" value="Glycoside_hydrolase_SF"/>
</dbReference>
<dbReference type="InterPro" id="IPR050226">
    <property type="entry name" value="NagZ_Beta-hexosaminidase"/>
</dbReference>
<dbReference type="NCBIfam" id="NF003740">
    <property type="entry name" value="PRK05337.1"/>
    <property type="match status" value="1"/>
</dbReference>
<dbReference type="PANTHER" id="PTHR30480:SF13">
    <property type="entry name" value="BETA-HEXOSAMINIDASE"/>
    <property type="match status" value="1"/>
</dbReference>
<dbReference type="PANTHER" id="PTHR30480">
    <property type="entry name" value="BETA-HEXOSAMINIDASE-RELATED"/>
    <property type="match status" value="1"/>
</dbReference>
<dbReference type="Pfam" id="PF00933">
    <property type="entry name" value="Glyco_hydro_3"/>
    <property type="match status" value="1"/>
</dbReference>
<dbReference type="SUPFAM" id="SSF51445">
    <property type="entry name" value="(Trans)glycosidases"/>
    <property type="match status" value="1"/>
</dbReference>
<dbReference type="PROSITE" id="PS00775">
    <property type="entry name" value="GLYCOSYL_HYDROL_F3"/>
    <property type="match status" value="1"/>
</dbReference>
<gene>
    <name evidence="1" type="primary">nagZ</name>
    <name type="ordered locus">SCH_1159</name>
</gene>
<keyword id="KW-0131">Cell cycle</keyword>
<keyword id="KW-0132">Cell division</keyword>
<keyword id="KW-0133">Cell shape</keyword>
<keyword id="KW-0961">Cell wall biogenesis/degradation</keyword>
<keyword id="KW-0963">Cytoplasm</keyword>
<keyword id="KW-0326">Glycosidase</keyword>
<keyword id="KW-0378">Hydrolase</keyword>
<keyword id="KW-0573">Peptidoglycan synthesis</keyword>
<sequence>MGPVMLNVEGCELDAEEREILAHPLVGGLILFTRNYHDPEQLRELVRQIRAASRNHLVVAVDQEGGRVQRFREGFTRLPAAQSFFALHGLEEGGRLAQEAGWLMASEMIAMDIDISFAPVLDVGHISAAIGERSYHADPAKALAMATRFIDGMHDAGMKTTGKHFPGHGAVTADSHKETPCDPRPETDIRGKDMSVFRTLISENKLDAIMPAHVIYRAIDPRPASGSPYWLKTVLRQELGFDGVIFSDDLSMEGAAIMGSYAERAQASLDAGCDMILVCNNRKGAVSVLDNLSPIKAERVTRLYHKGSFSRRELMDSARWKTASAQLNQLHERWQEEKAGH</sequence>
<organism>
    <name type="scientific">Salmonella choleraesuis (strain SC-B67)</name>
    <dbReference type="NCBI Taxonomy" id="321314"/>
    <lineage>
        <taxon>Bacteria</taxon>
        <taxon>Pseudomonadati</taxon>
        <taxon>Pseudomonadota</taxon>
        <taxon>Gammaproteobacteria</taxon>
        <taxon>Enterobacterales</taxon>
        <taxon>Enterobacteriaceae</taxon>
        <taxon>Salmonella</taxon>
    </lineage>
</organism>
<proteinExistence type="inferred from homology"/>
<reference key="1">
    <citation type="journal article" date="2005" name="Nucleic Acids Res.">
        <title>The genome sequence of Salmonella enterica serovar Choleraesuis, a highly invasive and resistant zoonotic pathogen.</title>
        <authorList>
            <person name="Chiu C.-H."/>
            <person name="Tang P."/>
            <person name="Chu C."/>
            <person name="Hu S."/>
            <person name="Bao Q."/>
            <person name="Yu J."/>
            <person name="Chou Y.-Y."/>
            <person name="Wang H.-S."/>
            <person name="Lee Y.-S."/>
        </authorList>
    </citation>
    <scope>NUCLEOTIDE SEQUENCE [LARGE SCALE GENOMIC DNA]</scope>
    <source>
        <strain>SC-B67</strain>
    </source>
</reference>
<evidence type="ECO:0000255" key="1">
    <source>
        <dbReference type="HAMAP-Rule" id="MF_00364"/>
    </source>
</evidence>
<evidence type="ECO:0000256" key="2">
    <source>
        <dbReference type="SAM" id="MobiDB-lite"/>
    </source>
</evidence>
<protein>
    <recommendedName>
        <fullName evidence="1">Beta-hexosaminidase</fullName>
        <ecNumber evidence="1">3.2.1.52</ecNumber>
    </recommendedName>
    <alternativeName>
        <fullName evidence="1">Beta-N-acetylhexosaminidase</fullName>
    </alternativeName>
    <alternativeName>
        <fullName evidence="1">N-acetyl-beta-glucosaminidase</fullName>
    </alternativeName>
</protein>
<name>NAGZ_SALCH</name>
<feature type="chain" id="PRO_0000234921" description="Beta-hexosaminidase">
    <location>
        <begin position="1"/>
        <end position="341"/>
    </location>
</feature>
<feature type="region of interest" description="Disordered" evidence="2">
    <location>
        <begin position="170"/>
        <end position="189"/>
    </location>
</feature>
<feature type="compositionally biased region" description="Basic and acidic residues" evidence="2">
    <location>
        <begin position="174"/>
        <end position="189"/>
    </location>
</feature>
<feature type="active site" description="Proton donor/acceptor" evidence="1">
    <location>
        <position position="176"/>
    </location>
</feature>
<feature type="active site" description="Nucleophile" evidence="1">
    <location>
        <position position="248"/>
    </location>
</feature>
<feature type="binding site" evidence="1">
    <location>
        <position position="62"/>
    </location>
    <ligand>
        <name>substrate</name>
    </ligand>
</feature>
<feature type="binding site" evidence="1">
    <location>
        <position position="70"/>
    </location>
    <ligand>
        <name>substrate</name>
    </ligand>
</feature>
<feature type="binding site" evidence="1">
    <location>
        <position position="133"/>
    </location>
    <ligand>
        <name>substrate</name>
    </ligand>
</feature>
<feature type="binding site" evidence="1">
    <location>
        <begin position="163"/>
        <end position="164"/>
    </location>
    <ligand>
        <name>substrate</name>
    </ligand>
</feature>
<feature type="site" description="Important for catalytic activity" evidence="1">
    <location>
        <position position="174"/>
    </location>
</feature>